<evidence type="ECO:0000255" key="1"/>
<evidence type="ECO:0000256" key="2">
    <source>
        <dbReference type="SAM" id="MobiDB-lite"/>
    </source>
</evidence>
<evidence type="ECO:0000269" key="3">
    <source>
    </source>
</evidence>
<evidence type="ECO:0000303" key="4">
    <source>
    </source>
</evidence>
<evidence type="ECO:0000305" key="5"/>
<evidence type="ECO:0000312" key="6">
    <source>
        <dbReference type="Proteomes" id="UP000009136"/>
    </source>
</evidence>
<evidence type="ECO:0007744" key="7">
    <source>
        <dbReference type="PDB" id="7RRO"/>
    </source>
</evidence>
<sequence length="687" mass="77563">MPFGLSAGSTRSEDGSEAFLEGMVDWELSRLQRQCKVMEDERRAYSKEVHQRINKQLEEIQRLEGVRHKLRVQISIAQSQVRRLRDSERLESMGHLLKCQVRVQAEVKELQAQNQALDREIQEWESRNSAHSKNARSPGCVQHDKVKSQRRIKSLENQLDKVICRFDIQLAQNATLREELDLLRIERNRYLNVDRKLQKEIQLLKDSVRNLMVSSTSAYTVREEAKAKLGMLRERAEKEVAQNETEVQILQRQIAHLEQLHHFLKLKNGDRQPDSAIVEKREQRAREVAEGLRKTSQEKLVLRYEDALNKLSQMTGESDPDLLVEKYLELEERNFAEFNFINEQNSELEHLQEEIKEMQEALVSGRRSEEDRRAQQEQQRAELQQRVDDVHSEADDLEARYHNFREQLEKLKTNIQHLFTRAQCDSTLINDLLGIKTHMRDRDISLFLSLIEKRLVQLLTVQAFLETQVVVMFNAALMVLGQSSEDFPKKVAPPQPPDNLEDPPGFEAKDDYPLSKEELLSSVMKAEQHLKELVESIKVESTPSMTSSTQKVSSSSRLVTQRPSQVPGSIMSHRTSGILVSSGGRATSSNVGHVTFGDSSATTGGLMSSRGSIPGRVTFRSPNSSSYLGSTGYVGSSRDHDSFEASKGPGSESSGGLGSSPGPASSPGPASSTGQASSTSKDSQSNY</sequence>
<keyword id="KW-0002">3D-structure</keyword>
<keyword id="KW-0966">Cell projection</keyword>
<keyword id="KW-0969">Cilium</keyword>
<keyword id="KW-0175">Coiled coil</keyword>
<keyword id="KW-0963">Cytoplasm</keyword>
<keyword id="KW-0206">Cytoskeleton</keyword>
<keyword id="KW-0597">Phosphoprotein</keyword>
<keyword id="KW-1185">Reference proteome</keyword>
<protein>
    <recommendedName>
        <fullName>Outer dynein arm-docking complex subunit 1</fullName>
    </recommendedName>
</protein>
<feature type="chain" id="PRO_0000455518" description="Outer dynein arm-docking complex subunit 1">
    <location>
        <begin position="1"/>
        <end position="687"/>
    </location>
</feature>
<feature type="region of interest" description="Disordered" evidence="2">
    <location>
        <begin position="126"/>
        <end position="147"/>
    </location>
</feature>
<feature type="region of interest" description="Disordered" evidence="2">
    <location>
        <begin position="363"/>
        <end position="388"/>
    </location>
</feature>
<feature type="region of interest" description="Disordered" evidence="2">
    <location>
        <begin position="487"/>
        <end position="511"/>
    </location>
</feature>
<feature type="region of interest" description="Disordered" evidence="2">
    <location>
        <begin position="540"/>
        <end position="687"/>
    </location>
</feature>
<feature type="coiled-coil region" evidence="1">
    <location>
        <begin position="100"/>
        <end position="193"/>
    </location>
</feature>
<feature type="coiled-coil region" evidence="1">
    <location>
        <begin position="222"/>
        <end position="267"/>
    </location>
</feature>
<feature type="coiled-coil region" evidence="1">
    <location>
        <begin position="341"/>
        <end position="421"/>
    </location>
</feature>
<feature type="compositionally biased region" description="Basic and acidic residues" evidence="2">
    <location>
        <begin position="366"/>
        <end position="388"/>
    </location>
</feature>
<feature type="compositionally biased region" description="Low complexity" evidence="2">
    <location>
        <begin position="544"/>
        <end position="556"/>
    </location>
</feature>
<feature type="compositionally biased region" description="Polar residues" evidence="2">
    <location>
        <begin position="557"/>
        <end position="611"/>
    </location>
</feature>
<feature type="compositionally biased region" description="Polar residues" evidence="2">
    <location>
        <begin position="620"/>
        <end position="629"/>
    </location>
</feature>
<feature type="compositionally biased region" description="Low complexity" evidence="2">
    <location>
        <begin position="660"/>
        <end position="680"/>
    </location>
</feature>
<reference key="1">
    <citation type="submission" date="2018-03" db="EMBL/GenBank/DDBJ databases">
        <title>ARS-UCD1.2.</title>
        <authorList>
            <person name="Rosen B.D."/>
            <person name="Bickhart D.M."/>
            <person name="Koren S."/>
            <person name="Schnabel R.D."/>
            <person name="Hall R."/>
            <person name="Zimin A."/>
            <person name="Dreischer C."/>
            <person name="Schultheiss S."/>
            <person name="Schroeder S.G."/>
            <person name="Elsik C.G."/>
            <person name="Couldrey C."/>
            <person name="Liu G.E."/>
            <person name="Van Tassell C.P."/>
            <person name="Phillippy A.M."/>
            <person name="Smith T.P.L."/>
            <person name="Medrano J.F."/>
        </authorList>
    </citation>
    <scope>NUCLEOTIDE SEQUENCE [LARGE SCALE GENOMIC DNA]</scope>
    <source>
        <strain evidence="6">Hereford</strain>
    </source>
</reference>
<reference evidence="7" key="2">
    <citation type="journal article" date="2021" name="Cell">
        <title>De novo identification of mammalian ciliary motility proteins using cryo-EM.</title>
        <authorList>
            <person name="Gui M."/>
            <person name="Farley H."/>
            <person name="Anujan P."/>
            <person name="Anderson J.R."/>
            <person name="Maxwell D.W."/>
            <person name="Whitchurch J.B."/>
            <person name="Botsch J.J."/>
            <person name="Qiu T."/>
            <person name="Meleppattu S."/>
            <person name="Singh S.K."/>
            <person name="Zhang Q."/>
            <person name="Thompson J."/>
            <person name="Lucas J.S."/>
            <person name="Bingle C.D."/>
            <person name="Norris D.P."/>
            <person name="Roy S."/>
            <person name="Brown A."/>
        </authorList>
    </citation>
    <scope>STRUCTURE BY ELECTRON MICROSCOPY (3.40 ANGSTROMS)</scope>
    <scope>SUBUNIT</scope>
    <scope>FUNCTION</scope>
    <scope>INTERACTION WITH PIERCE1 AND PIERCE2</scope>
    <scope>SUBCELLULAR LOCATION</scope>
    <scope>TISSUE SPECIFICITY</scope>
</reference>
<gene>
    <name type="primary">ODAD1</name>
    <name evidence="4" type="synonym">CCDC114</name>
</gene>
<organism evidence="6">
    <name type="scientific">Bos taurus</name>
    <name type="common">Bovine</name>
    <dbReference type="NCBI Taxonomy" id="9913"/>
    <lineage>
        <taxon>Eukaryota</taxon>
        <taxon>Metazoa</taxon>
        <taxon>Chordata</taxon>
        <taxon>Craniata</taxon>
        <taxon>Vertebrata</taxon>
        <taxon>Euteleostomi</taxon>
        <taxon>Mammalia</taxon>
        <taxon>Eutheria</taxon>
        <taxon>Laurasiatheria</taxon>
        <taxon>Artiodactyla</taxon>
        <taxon>Ruminantia</taxon>
        <taxon>Pecora</taxon>
        <taxon>Bovidae</taxon>
        <taxon>Bovinae</taxon>
        <taxon>Bos</taxon>
    </lineage>
</organism>
<name>ODAD1_BOVIN</name>
<comment type="function">
    <text evidence="3">Component of the outer dynein arm-docking complex (ODA-DC) that mediates outer dynein arms (ODA) binding onto the doublet microtubule. Involved in mediating assembly of both ODAs and their axonemal docking complex onto ciliary microtubules.</text>
</comment>
<comment type="subunit">
    <text evidence="3">Component of the outer dynein arm-docking complex along with ODAD2, ODAD3, ODAD4 and CLXN. Interacts with ODAD3. Interacts with ODAD4; this interaction may facilitate the recruitment and/or attachment of outer dynein arm docking complex proteins, including ODAD1, ODAD3, and ODAD4 to ciliary axonemes. Interacts with DNAH9. Interacts with MNS1 (PubMed:34715025). Interacts with PIERCE1 and PIERCE2; the interactions link the outer dynein arms docking complex (ODA-DC) to the internal microtubule inner proteins (MIP) in cilium axoneme (PubMed:34715025).</text>
</comment>
<comment type="subcellular location">
    <subcellularLocation>
        <location evidence="3">Cytoplasm</location>
        <location evidence="3">Cytoskeleton</location>
        <location evidence="3">Cilium axoneme</location>
    </subcellularLocation>
</comment>
<comment type="tissue specificity">
    <text evidence="3">Expressed in trachea multiciliated cells.</text>
</comment>
<comment type="similarity">
    <text evidence="5">Belongs to the ODA1/DCC2 family.</text>
</comment>
<proteinExistence type="evidence at protein level"/>
<accession>F1N2N9</accession>
<dbReference type="PDB" id="7RRO">
    <property type="method" value="EM"/>
    <property type="resolution" value="3.40 A"/>
    <property type="chains" value="H1/H2/H3=1-687"/>
</dbReference>
<dbReference type="PDB" id="9CPB">
    <property type="method" value="EM"/>
    <property type="resolution" value="3.52 A"/>
    <property type="chains" value="1D/1E/1F=1-687"/>
</dbReference>
<dbReference type="PDBsum" id="7RRO"/>
<dbReference type="PDBsum" id="9CPB"/>
<dbReference type="EMDB" id="EMD-24664"/>
<dbReference type="EMDB" id="EMD-45801"/>
<dbReference type="SMR" id="F1N2N9"/>
<dbReference type="FunCoup" id="F1N2N9">
    <property type="interactions" value="65"/>
</dbReference>
<dbReference type="STRING" id="9913.ENSBTAP00000040922"/>
<dbReference type="PaxDb" id="9913-ENSBTAP00000040922"/>
<dbReference type="VEuPathDB" id="HostDB:ENSBTAG00000030667"/>
<dbReference type="eggNOG" id="ENOG502QSIU">
    <property type="taxonomic scope" value="Eukaryota"/>
</dbReference>
<dbReference type="HOGENOM" id="CLU_027546_3_1_1"/>
<dbReference type="InParanoid" id="F1N2N9"/>
<dbReference type="OMA" id="MRCEDAM"/>
<dbReference type="TreeFam" id="TF323742"/>
<dbReference type="Proteomes" id="UP000009136">
    <property type="component" value="Chromosome 18"/>
</dbReference>
<dbReference type="Bgee" id="ENSBTAG00000030667">
    <property type="expression patterns" value="Expressed in olfactory segment of nasal mucosa and 101 other cell types or tissues"/>
</dbReference>
<dbReference type="GO" id="GO:0005930">
    <property type="term" value="C:axoneme"/>
    <property type="evidence" value="ECO:0000318"/>
    <property type="project" value="GO_Central"/>
</dbReference>
<dbReference type="GO" id="GO:0120228">
    <property type="term" value="C:outer dynein arm docking complex"/>
    <property type="evidence" value="ECO:0000314"/>
    <property type="project" value="UniProtKB"/>
</dbReference>
<dbReference type="GO" id="GO:0003341">
    <property type="term" value="P:cilium movement"/>
    <property type="evidence" value="ECO:0000314"/>
    <property type="project" value="UniProtKB"/>
</dbReference>
<dbReference type="GO" id="GO:0036158">
    <property type="term" value="P:outer dynein arm assembly"/>
    <property type="evidence" value="ECO:0000314"/>
    <property type="project" value="UniProtKB"/>
</dbReference>
<dbReference type="InterPro" id="IPR051876">
    <property type="entry name" value="ODA-DC/CCD"/>
</dbReference>
<dbReference type="InterPro" id="IPR049258">
    <property type="entry name" value="ODAD1_CC"/>
</dbReference>
<dbReference type="PANTHER" id="PTHR21694">
    <property type="entry name" value="COILED-COIL DOMAIN-CONTAINING PROTEIN 63"/>
    <property type="match status" value="1"/>
</dbReference>
<dbReference type="PANTHER" id="PTHR21694:SF35">
    <property type="entry name" value="OUTER DYNEIN ARM-DOCKING COMPLEX SUBUNIT 1"/>
    <property type="match status" value="1"/>
</dbReference>
<dbReference type="Pfam" id="PF21773">
    <property type="entry name" value="ODAD1_CC"/>
    <property type="match status" value="1"/>
</dbReference>